<accession>Q92784</accession>
<accession>A8MSI3</accession>
<accession>B7Z276</accession>
<accession>F5H575</accession>
<accession>Q32UJ0</accession>
<accession>Q6P9E6</accession>
<accession>Q6ZT41</accession>
<accession>Q9H7Y5</accession>
<reference key="1">
    <citation type="journal article" date="2008" name="Genes Dev.">
        <title>Regulation of muscle development by DPF3, a novel histone acetylation and methylation reader of the BAF chromatin remodeling complex.</title>
        <authorList>
            <person name="Lange M."/>
            <person name="Kaynak B."/>
            <person name="Forster U.B."/>
            <person name="Toenjes M."/>
            <person name="Fischer J.J."/>
            <person name="Grimm C."/>
            <person name="Schlesinger J."/>
            <person name="Just S."/>
            <person name="Dunkel I."/>
            <person name="Krueger T."/>
            <person name="Mebus S."/>
            <person name="Lehrach H."/>
            <person name="Lurz R."/>
            <person name="Gobom J."/>
            <person name="Rottbauer W."/>
            <person name="Abdelilah-Seyfried S."/>
            <person name="Sperling S."/>
        </authorList>
    </citation>
    <scope>NUCLEOTIDE SEQUENCE [MRNA] (ISOFORMS 1 AND 2)</scope>
    <scope>FUNCTION</scope>
    <scope>IDENTIFICATION IN THE BAF COMPLEX</scope>
    <scope>IDENTIFICATION BY MASS SPECTROMETRY</scope>
    <scope>DOMAIN</scope>
    <scope>INTERACTION WITH HISTONES</scope>
    <scope>MUTAGENESIS OF TRP-358; CYS-360 AND CYS-363</scope>
    <source>
        <tissue>Heart</tissue>
    </source>
</reference>
<reference key="2">
    <citation type="journal article" date="2004" name="Nat. Genet.">
        <title>Complete sequencing and characterization of 21,243 full-length human cDNAs.</title>
        <authorList>
            <person name="Ota T."/>
            <person name="Suzuki Y."/>
            <person name="Nishikawa T."/>
            <person name="Otsuki T."/>
            <person name="Sugiyama T."/>
            <person name="Irie R."/>
            <person name="Wakamatsu A."/>
            <person name="Hayashi K."/>
            <person name="Sato H."/>
            <person name="Nagai K."/>
            <person name="Kimura K."/>
            <person name="Makita H."/>
            <person name="Sekine M."/>
            <person name="Obayashi M."/>
            <person name="Nishi T."/>
            <person name="Shibahara T."/>
            <person name="Tanaka T."/>
            <person name="Ishii S."/>
            <person name="Yamamoto J."/>
            <person name="Saito K."/>
            <person name="Kawai Y."/>
            <person name="Isono Y."/>
            <person name="Nakamura Y."/>
            <person name="Nagahari K."/>
            <person name="Murakami K."/>
            <person name="Yasuda T."/>
            <person name="Iwayanagi T."/>
            <person name="Wagatsuma M."/>
            <person name="Shiratori A."/>
            <person name="Sudo H."/>
            <person name="Hosoiri T."/>
            <person name="Kaku Y."/>
            <person name="Kodaira H."/>
            <person name="Kondo H."/>
            <person name="Sugawara M."/>
            <person name="Takahashi M."/>
            <person name="Kanda K."/>
            <person name="Yokoi T."/>
            <person name="Furuya T."/>
            <person name="Kikkawa E."/>
            <person name="Omura Y."/>
            <person name="Abe K."/>
            <person name="Kamihara K."/>
            <person name="Katsuta N."/>
            <person name="Sato K."/>
            <person name="Tanikawa M."/>
            <person name="Yamazaki M."/>
            <person name="Ninomiya K."/>
            <person name="Ishibashi T."/>
            <person name="Yamashita H."/>
            <person name="Murakawa K."/>
            <person name="Fujimori K."/>
            <person name="Tanai H."/>
            <person name="Kimata M."/>
            <person name="Watanabe M."/>
            <person name="Hiraoka S."/>
            <person name="Chiba Y."/>
            <person name="Ishida S."/>
            <person name="Ono Y."/>
            <person name="Takiguchi S."/>
            <person name="Watanabe S."/>
            <person name="Yosida M."/>
            <person name="Hotuta T."/>
            <person name="Kusano J."/>
            <person name="Kanehori K."/>
            <person name="Takahashi-Fujii A."/>
            <person name="Hara H."/>
            <person name="Tanase T.-O."/>
            <person name="Nomura Y."/>
            <person name="Togiya S."/>
            <person name="Komai F."/>
            <person name="Hara R."/>
            <person name="Takeuchi K."/>
            <person name="Arita M."/>
            <person name="Imose N."/>
            <person name="Musashino K."/>
            <person name="Yuuki H."/>
            <person name="Oshima A."/>
            <person name="Sasaki N."/>
            <person name="Aotsuka S."/>
            <person name="Yoshikawa Y."/>
            <person name="Matsunawa H."/>
            <person name="Ichihara T."/>
            <person name="Shiohata N."/>
            <person name="Sano S."/>
            <person name="Moriya S."/>
            <person name="Momiyama H."/>
            <person name="Satoh N."/>
            <person name="Takami S."/>
            <person name="Terashima Y."/>
            <person name="Suzuki O."/>
            <person name="Nakagawa S."/>
            <person name="Senoh A."/>
            <person name="Mizoguchi H."/>
            <person name="Goto Y."/>
            <person name="Shimizu F."/>
            <person name="Wakebe H."/>
            <person name="Hishigaki H."/>
            <person name="Watanabe T."/>
            <person name="Sugiyama A."/>
            <person name="Takemoto M."/>
            <person name="Kawakami B."/>
            <person name="Yamazaki M."/>
            <person name="Watanabe K."/>
            <person name="Kumagai A."/>
            <person name="Itakura S."/>
            <person name="Fukuzumi Y."/>
            <person name="Fujimori Y."/>
            <person name="Komiyama M."/>
            <person name="Tashiro H."/>
            <person name="Tanigami A."/>
            <person name="Fujiwara T."/>
            <person name="Ono T."/>
            <person name="Yamada K."/>
            <person name="Fujii Y."/>
            <person name="Ozaki K."/>
            <person name="Hirao M."/>
            <person name="Ohmori Y."/>
            <person name="Kawabata A."/>
            <person name="Hikiji T."/>
            <person name="Kobatake N."/>
            <person name="Inagaki H."/>
            <person name="Ikema Y."/>
            <person name="Okamoto S."/>
            <person name="Okitani R."/>
            <person name="Kawakami T."/>
            <person name="Noguchi S."/>
            <person name="Itoh T."/>
            <person name="Shigeta K."/>
            <person name="Senba T."/>
            <person name="Matsumura K."/>
            <person name="Nakajima Y."/>
            <person name="Mizuno T."/>
            <person name="Morinaga M."/>
            <person name="Sasaki M."/>
            <person name="Togashi T."/>
            <person name="Oyama M."/>
            <person name="Hata H."/>
            <person name="Watanabe M."/>
            <person name="Komatsu T."/>
            <person name="Mizushima-Sugano J."/>
            <person name="Satoh T."/>
            <person name="Shirai Y."/>
            <person name="Takahashi Y."/>
            <person name="Nakagawa K."/>
            <person name="Okumura K."/>
            <person name="Nagase T."/>
            <person name="Nomura N."/>
            <person name="Kikuchi H."/>
            <person name="Masuho Y."/>
            <person name="Yamashita R."/>
            <person name="Nakai K."/>
            <person name="Yada T."/>
            <person name="Nakamura Y."/>
            <person name="Ohara O."/>
            <person name="Isogai T."/>
            <person name="Sugano S."/>
        </authorList>
    </citation>
    <scope>NUCLEOTIDE SEQUENCE [LARGE SCALE MRNA] (ISOFORMS 3; 4 AND 5)</scope>
    <source>
        <tissue>Brain</tissue>
        <tissue>Embryo</tissue>
    </source>
</reference>
<reference key="3">
    <citation type="journal article" date="2003" name="Nature">
        <title>The DNA sequence and analysis of human chromosome 14.</title>
        <authorList>
            <person name="Heilig R."/>
            <person name="Eckenberg R."/>
            <person name="Petit J.-L."/>
            <person name="Fonknechten N."/>
            <person name="Da Silva C."/>
            <person name="Cattolico L."/>
            <person name="Levy M."/>
            <person name="Barbe V."/>
            <person name="De Berardinis V."/>
            <person name="Ureta-Vidal A."/>
            <person name="Pelletier E."/>
            <person name="Vico V."/>
            <person name="Anthouard V."/>
            <person name="Rowen L."/>
            <person name="Madan A."/>
            <person name="Qin S."/>
            <person name="Sun H."/>
            <person name="Du H."/>
            <person name="Pepin K."/>
            <person name="Artiguenave F."/>
            <person name="Robert C."/>
            <person name="Cruaud C."/>
            <person name="Bruels T."/>
            <person name="Jaillon O."/>
            <person name="Friedlander L."/>
            <person name="Samson G."/>
            <person name="Brottier P."/>
            <person name="Cure S."/>
            <person name="Segurens B."/>
            <person name="Aniere F."/>
            <person name="Samain S."/>
            <person name="Crespeau H."/>
            <person name="Abbasi N."/>
            <person name="Aiach N."/>
            <person name="Boscus D."/>
            <person name="Dickhoff R."/>
            <person name="Dors M."/>
            <person name="Dubois I."/>
            <person name="Friedman C."/>
            <person name="Gouyvenoux M."/>
            <person name="James R."/>
            <person name="Madan A."/>
            <person name="Mairey-Estrada B."/>
            <person name="Mangenot S."/>
            <person name="Martins N."/>
            <person name="Menard M."/>
            <person name="Oztas S."/>
            <person name="Ratcliffe A."/>
            <person name="Shaffer T."/>
            <person name="Trask B."/>
            <person name="Vacherie B."/>
            <person name="Bellemere C."/>
            <person name="Belser C."/>
            <person name="Besnard-Gonnet M."/>
            <person name="Bartol-Mavel D."/>
            <person name="Boutard M."/>
            <person name="Briez-Silla S."/>
            <person name="Combette S."/>
            <person name="Dufosse-Laurent V."/>
            <person name="Ferron C."/>
            <person name="Lechaplais C."/>
            <person name="Louesse C."/>
            <person name="Muselet D."/>
            <person name="Magdelenat G."/>
            <person name="Pateau E."/>
            <person name="Petit E."/>
            <person name="Sirvain-Trukniewicz P."/>
            <person name="Trybou A."/>
            <person name="Vega-Czarny N."/>
            <person name="Bataille E."/>
            <person name="Bluet E."/>
            <person name="Bordelais I."/>
            <person name="Dubois M."/>
            <person name="Dumont C."/>
            <person name="Guerin T."/>
            <person name="Haffray S."/>
            <person name="Hammadi R."/>
            <person name="Muanga J."/>
            <person name="Pellouin V."/>
            <person name="Robert D."/>
            <person name="Wunderle E."/>
            <person name="Gauguet G."/>
            <person name="Roy A."/>
            <person name="Sainte-Marthe L."/>
            <person name="Verdier J."/>
            <person name="Verdier-Discala C."/>
            <person name="Hillier L.W."/>
            <person name="Fulton L."/>
            <person name="McPherson J."/>
            <person name="Matsuda F."/>
            <person name="Wilson R."/>
            <person name="Scarpelli C."/>
            <person name="Gyapay G."/>
            <person name="Wincker P."/>
            <person name="Saurin W."/>
            <person name="Quetier F."/>
            <person name="Waterston R."/>
            <person name="Hood L."/>
            <person name="Weissenbach J."/>
        </authorList>
    </citation>
    <scope>NUCLEOTIDE SEQUENCE [LARGE SCALE GENOMIC DNA]</scope>
</reference>
<reference key="4">
    <citation type="journal article" date="2004" name="Genome Res.">
        <title>The status, quality, and expansion of the NIH full-length cDNA project: the Mammalian Gene Collection (MGC).</title>
        <authorList>
            <consortium name="The MGC Project Team"/>
        </authorList>
    </citation>
    <scope>NUCLEOTIDE SEQUENCE [LARGE SCALE MRNA] (ISOFORM 2)</scope>
    <scope>VARIANT HIS-177</scope>
    <source>
        <tissue>Brain</tissue>
    </source>
</reference>
<reference key="5">
    <citation type="journal article" date="1996" name="Genomics">
        <title>The d4 gene family in the human genome.</title>
        <authorList>
            <person name="Chestkov A.V."/>
            <person name="Baka I.D."/>
            <person name="Kost M.V."/>
            <person name="Georgiev G.P."/>
            <person name="Buchman V.L."/>
        </authorList>
    </citation>
    <scope>NUCLEOTIDE SEQUENCE [GENOMIC DNA] OF 12-64</scope>
</reference>
<reference key="6">
    <citation type="journal article" date="2017" name="Nat. Struct. Mol. Biol.">
        <title>Site-specific mapping of the human SUMO proteome reveals co-modification with phosphorylation.</title>
        <authorList>
            <person name="Hendriks I.A."/>
            <person name="Lyon D."/>
            <person name="Young C."/>
            <person name="Jensen L.J."/>
            <person name="Vertegaal A.C."/>
            <person name="Nielsen M.L."/>
        </authorList>
    </citation>
    <scope>SUMOYLATION [LARGE SCALE ANALYSIS] AT LYS-99</scope>
    <scope>IDENTIFICATION BY MASS SPECTROMETRY [LARGE SCALE ANALYSIS]</scope>
</reference>
<reference key="7">
    <citation type="journal article" date="2020" name="Nucleic Acids Res.">
        <title>HRP2-DPF3a-BAF complex coordinates histone modification and chromatin remodeling to regulate myogenic gene transcription.</title>
        <authorList>
            <person name="Zhu X."/>
            <person name="Lan B."/>
            <person name="Yi X."/>
            <person name="He C."/>
            <person name="Dang L."/>
            <person name="Zhou X."/>
            <person name="Lu Y."/>
            <person name="Sun Y."/>
            <person name="Liu Z."/>
            <person name="Bai X."/>
            <person name="Zhang K."/>
            <person name="Li B."/>
            <person name="Li M.J."/>
            <person name="Chen Y."/>
            <person name="Zhang L."/>
        </authorList>
    </citation>
    <scope>FUNCTION (ISOFORM 2)</scope>
    <scope>INTERACTION WITH HDGFL2; SMARCA4; SMARCC1 AND SMARCD1 (ISOFORM 2)</scope>
    <scope>PHOSPHORYLATION AT SER-323 (ISOFORM 2)</scope>
    <scope>MUTAGENESIS OF SER-323; PHE-325 AND PHE-328 (ISOFORM 2)</scope>
</reference>
<reference key="8">
    <citation type="journal article" date="2010" name="Nature">
        <title>Mechanism and regulation of acetylated histone binding by the tandem PHD finger of DPF3b.</title>
        <authorList>
            <person name="Zeng L."/>
            <person name="Zhang Q."/>
            <person name="Li S."/>
            <person name="Plotnikov A.N."/>
            <person name="Walsh M.J."/>
            <person name="Zhou M.M."/>
        </authorList>
    </citation>
    <scope>STRUCTURE BY NMR OF 261-372</scope>
    <scope>DOMAIN PHD</scope>
</reference>
<protein>
    <recommendedName>
        <fullName>Zinc finger protein DPF3</fullName>
    </recommendedName>
    <alternativeName>
        <fullName>BRG1-associated factor 45C</fullName>
        <shortName>BAF45C</shortName>
    </alternativeName>
    <alternativeName>
        <fullName>Zinc finger protein cer-d4</fullName>
    </alternativeName>
</protein>
<dbReference type="EMBL" id="AY803021">
    <property type="protein sequence ID" value="AAX20019.1"/>
    <property type="molecule type" value="mRNA"/>
</dbReference>
<dbReference type="EMBL" id="AK024141">
    <property type="protein sequence ID" value="BAB14838.1"/>
    <property type="status" value="ALT_FRAME"/>
    <property type="molecule type" value="mRNA"/>
</dbReference>
<dbReference type="EMBL" id="AK126933">
    <property type="protein sequence ID" value="BAC86753.1"/>
    <property type="molecule type" value="mRNA"/>
</dbReference>
<dbReference type="EMBL" id="AK294425">
    <property type="protein sequence ID" value="BAH11762.1"/>
    <property type="molecule type" value="mRNA"/>
</dbReference>
<dbReference type="EMBL" id="AC004828">
    <property type="status" value="NOT_ANNOTATED_CDS"/>
    <property type="molecule type" value="Genomic_DNA"/>
</dbReference>
<dbReference type="EMBL" id="AC006360">
    <property type="status" value="NOT_ANNOTATED_CDS"/>
    <property type="molecule type" value="Genomic_DNA"/>
</dbReference>
<dbReference type="EMBL" id="AL392024">
    <property type="status" value="NOT_ANNOTATED_CDS"/>
    <property type="molecule type" value="Genomic_DNA"/>
</dbReference>
<dbReference type="EMBL" id="AC007160">
    <property type="status" value="NOT_ANNOTATED_CDS"/>
    <property type="molecule type" value="Genomic_DNA"/>
</dbReference>
<dbReference type="EMBL" id="BC060801">
    <property type="protein sequence ID" value="AAH60801.1"/>
    <property type="molecule type" value="mRNA"/>
</dbReference>
<dbReference type="EMBL" id="U43919">
    <property type="protein sequence ID" value="AAC50686.1"/>
    <property type="molecule type" value="Genomic_DNA"/>
</dbReference>
<dbReference type="CCDS" id="CCDS45133.1">
    <molecule id="Q92784-2"/>
</dbReference>
<dbReference type="CCDS" id="CCDS61495.1">
    <molecule id="Q92784-5"/>
</dbReference>
<dbReference type="CCDS" id="CCDS61496.1">
    <molecule id="Q92784-3"/>
</dbReference>
<dbReference type="CCDS" id="CCDS61497.1">
    <molecule id="Q92784-1"/>
</dbReference>
<dbReference type="RefSeq" id="NP_001267471.1">
    <molecule id="Q92784-1"/>
    <property type="nucleotide sequence ID" value="NM_001280542.3"/>
</dbReference>
<dbReference type="RefSeq" id="NP_001267472.1">
    <molecule id="Q92784-5"/>
    <property type="nucleotide sequence ID" value="NM_001280543.2"/>
</dbReference>
<dbReference type="RefSeq" id="NP_001267473.1">
    <property type="nucleotide sequence ID" value="NM_001280544.1"/>
</dbReference>
<dbReference type="RefSeq" id="NP_036206.3">
    <molecule id="Q92784-2"/>
    <property type="nucleotide sequence ID" value="NM_012074.5"/>
</dbReference>
<dbReference type="RefSeq" id="XP_016877159.1">
    <property type="nucleotide sequence ID" value="XM_017021670.1"/>
</dbReference>
<dbReference type="RefSeq" id="XP_016877160.1">
    <property type="nucleotide sequence ID" value="XM_017021671.1"/>
</dbReference>
<dbReference type="PDB" id="2KWJ">
    <property type="method" value="NMR"/>
    <property type="chains" value="A=261-372"/>
</dbReference>
<dbReference type="PDB" id="2KWK">
    <property type="method" value="NMR"/>
    <property type="chains" value="A=261-372"/>
</dbReference>
<dbReference type="PDB" id="2KWN">
    <property type="method" value="NMR"/>
    <property type="chains" value="A=261-372"/>
</dbReference>
<dbReference type="PDB" id="2KWO">
    <property type="method" value="NMR"/>
    <property type="chains" value="A=261-372"/>
</dbReference>
<dbReference type="PDB" id="5I3L">
    <property type="method" value="X-ray"/>
    <property type="resolution" value="1.85 A"/>
    <property type="chains" value="A/B=254-368"/>
</dbReference>
<dbReference type="PDB" id="5SZB">
    <property type="method" value="X-ray"/>
    <property type="resolution" value="1.20 A"/>
    <property type="chains" value="A=254-368"/>
</dbReference>
<dbReference type="PDB" id="5SZC">
    <property type="method" value="X-ray"/>
    <property type="resolution" value="1.19 A"/>
    <property type="chains" value="A=254-368"/>
</dbReference>
<dbReference type="PDBsum" id="2KWJ"/>
<dbReference type="PDBsum" id="2KWK"/>
<dbReference type="PDBsum" id="2KWN"/>
<dbReference type="PDBsum" id="2KWO"/>
<dbReference type="PDBsum" id="5I3L"/>
<dbReference type="PDBsum" id="5SZB"/>
<dbReference type="PDBsum" id="5SZC"/>
<dbReference type="BMRB" id="Q92784"/>
<dbReference type="SMR" id="Q92784"/>
<dbReference type="BioGRID" id="113779">
    <property type="interactions" value="94"/>
</dbReference>
<dbReference type="ComplexPortal" id="CPX-1194">
    <property type="entry name" value="Muscle cell-specific SWI/SNF ATP-dependent chromatin remodeling complex, ACTL6A-ARID1A-SMARCA2 variant"/>
</dbReference>
<dbReference type="ComplexPortal" id="CPX-1202">
    <property type="entry name" value="Neuron-specific SWI/SNF ATP-dependent chromatin remodeling complex, ARID1A-SMARCA2 variant"/>
</dbReference>
<dbReference type="ComplexPortal" id="CPX-1216">
    <property type="entry name" value="Neuron-specific SWI/SNF ATP-dependent chromatin remodeling complex, ARID1A-SMARCA4 variant"/>
</dbReference>
<dbReference type="ComplexPortal" id="CPX-1217">
    <property type="entry name" value="Neuron-specific SWI/SNF ATP-dependent chromatin remodeling complex, ARID1B-SMARCA2 variant"/>
</dbReference>
<dbReference type="ComplexPortal" id="CPX-1218">
    <property type="entry name" value="Neuron-specific SWI/SNF ATP-dependent chromatin remodeling complex, ARID1B-SMARCA4 variant"/>
</dbReference>
<dbReference type="ComplexPortal" id="CPX-1222">
    <property type="entry name" value="Muscle cell-specific SWI/SNF ATP-dependent chromatin remodeling complex, ACTL6A-ARID1A-SMARCA4 variant"/>
</dbReference>
<dbReference type="ComplexPortal" id="CPX-1223">
    <property type="entry name" value="Muscle cell-specific SWI/SNF ATP-dependent chromatin remodeling complex, ACTL6A-ARID1B-SMARCA2 variant"/>
</dbReference>
<dbReference type="ComplexPortal" id="CPX-1224">
    <property type="entry name" value="Muscle cell-specific SWI/SNF ATP-dependent chromatin remodeling complex, ACTL6A-ARID1B-SMARCA4 variant"/>
</dbReference>
<dbReference type="ComplexPortal" id="CPX-1225">
    <property type="entry name" value="Muscle cell-specific SWI/SNF ATP-dependent chromatin remodeling complex, ACTL6B-ARID1A-SMARCA2 variant"/>
</dbReference>
<dbReference type="ComplexPortal" id="CPX-1226">
    <property type="entry name" value="Muscle cell-specific SWI/SNF ATP-dependent chromatin remodeling complex, ACTL6B-ARID1A-SMARCA4 variant"/>
</dbReference>
<dbReference type="ComplexPortal" id="CPX-1227">
    <property type="entry name" value="Muscle cell-specific SWI/SNF ATP-dependent chromatin remodeling complex, ACTL6B-ARID1B-SMARCA2 variant"/>
</dbReference>
<dbReference type="ComplexPortal" id="CPX-1228">
    <property type="entry name" value="Muscle cell-specific SWI/SNF ATP-dependent chromatin remodeling complex, ACTL6B-ARID1B-SMARCA4 variant"/>
</dbReference>
<dbReference type="DIP" id="DIP-59245N"/>
<dbReference type="FunCoup" id="Q92784">
    <property type="interactions" value="1179"/>
</dbReference>
<dbReference type="IntAct" id="Q92784">
    <property type="interactions" value="42"/>
</dbReference>
<dbReference type="MINT" id="Q92784"/>
<dbReference type="STRING" id="9606.ENSP00000479526"/>
<dbReference type="GlyGen" id="Q92784">
    <property type="glycosylation" value="1 site, 1 O-linked glycan (1 site)"/>
</dbReference>
<dbReference type="iPTMnet" id="Q92784"/>
<dbReference type="PhosphoSitePlus" id="Q92784"/>
<dbReference type="SwissPalm" id="Q92784"/>
<dbReference type="BioMuta" id="DPF3"/>
<dbReference type="DMDM" id="215274167"/>
<dbReference type="jPOST" id="Q92784"/>
<dbReference type="MassIVE" id="Q92784"/>
<dbReference type="PaxDb" id="9606-ENSP00000479526"/>
<dbReference type="PeptideAtlas" id="Q92784"/>
<dbReference type="ProteomicsDB" id="26794"/>
<dbReference type="ProteomicsDB" id="75465">
    <molecule id="Q92784-1"/>
</dbReference>
<dbReference type="ProteomicsDB" id="75466">
    <molecule id="Q92784-2"/>
</dbReference>
<dbReference type="ProteomicsDB" id="75467">
    <molecule id="Q92784-3"/>
</dbReference>
<dbReference type="ProteomicsDB" id="75468">
    <molecule id="Q92784-4"/>
</dbReference>
<dbReference type="Pumba" id="Q92784"/>
<dbReference type="Antibodypedia" id="25263">
    <property type="antibodies" value="129 antibodies from 24 providers"/>
</dbReference>
<dbReference type="DNASU" id="8110"/>
<dbReference type="Ensembl" id="ENST00000381216.8">
    <molecule id="Q92784-2"/>
    <property type="protein sequence ID" value="ENSP00000370614.4"/>
    <property type="gene ID" value="ENSG00000205683.12"/>
</dbReference>
<dbReference type="Ensembl" id="ENST00000556509.6">
    <molecule id="Q92784-1"/>
    <property type="protein sequence ID" value="ENSP00000450518.1"/>
    <property type="gene ID" value="ENSG00000205683.12"/>
</dbReference>
<dbReference type="Ensembl" id="ENST00000614862.5">
    <molecule id="Q92784-5"/>
    <property type="protein sequence ID" value="ENSP00000481992.1"/>
    <property type="gene ID" value="ENSG00000205683.12"/>
</dbReference>
<dbReference type="GeneID" id="8110"/>
<dbReference type="KEGG" id="hsa:8110"/>
<dbReference type="MANE-Select" id="ENST00000556509.6">
    <property type="protein sequence ID" value="ENSP00000450518.1"/>
    <property type="RefSeq nucleotide sequence ID" value="NM_001280542.3"/>
    <property type="RefSeq protein sequence ID" value="NP_001267471.1"/>
</dbReference>
<dbReference type="UCSC" id="uc001xnc.4">
    <molecule id="Q92784-1"/>
    <property type="organism name" value="human"/>
</dbReference>
<dbReference type="AGR" id="HGNC:17427"/>
<dbReference type="CTD" id="8110"/>
<dbReference type="DisGeNET" id="8110"/>
<dbReference type="GeneCards" id="DPF3"/>
<dbReference type="HGNC" id="HGNC:17427">
    <property type="gene designation" value="DPF3"/>
</dbReference>
<dbReference type="HPA" id="ENSG00000205683">
    <property type="expression patterns" value="Tissue enhanced (brain, heart muscle, retina, skeletal muscle)"/>
</dbReference>
<dbReference type="MIM" id="601672">
    <property type="type" value="gene"/>
</dbReference>
<dbReference type="neXtProt" id="NX_Q92784"/>
<dbReference type="OpenTargets" id="ENSG00000205683"/>
<dbReference type="PharmGKB" id="PA134888535"/>
<dbReference type="VEuPathDB" id="HostDB:ENSG00000205683"/>
<dbReference type="eggNOG" id="KOG1244">
    <property type="taxonomic scope" value="Eukaryota"/>
</dbReference>
<dbReference type="GeneTree" id="ENSGT00940000159153"/>
<dbReference type="HOGENOM" id="CLU_038980_0_1_1"/>
<dbReference type="InParanoid" id="Q92784"/>
<dbReference type="OMA" id="CLQFTIN"/>
<dbReference type="OrthoDB" id="1903104at2759"/>
<dbReference type="PAN-GO" id="Q92784">
    <property type="GO annotations" value="6 GO annotations based on evolutionary models"/>
</dbReference>
<dbReference type="PhylomeDB" id="Q92784"/>
<dbReference type="TreeFam" id="TF318971"/>
<dbReference type="PathwayCommons" id="Q92784"/>
<dbReference type="Reactome" id="R-HSA-9824585">
    <property type="pathway name" value="Regulation of MITF-M-dependent genes involved in pigmentation"/>
</dbReference>
<dbReference type="Reactome" id="R-HSA-9845323">
    <property type="pathway name" value="Regulation of endogenous retroelements by Piwi-interacting RNAs (piRNAs)"/>
</dbReference>
<dbReference type="SignaLink" id="Q92784"/>
<dbReference type="SIGNOR" id="Q92784"/>
<dbReference type="BioGRID-ORCS" id="8110">
    <property type="hits" value="12 hits in 1155 CRISPR screens"/>
</dbReference>
<dbReference type="ChiTaRS" id="DPF3">
    <property type="organism name" value="human"/>
</dbReference>
<dbReference type="EvolutionaryTrace" id="Q92784"/>
<dbReference type="GenomeRNAi" id="8110"/>
<dbReference type="Pharos" id="Q92784">
    <property type="development level" value="Tbio"/>
</dbReference>
<dbReference type="PRO" id="PR:Q92784"/>
<dbReference type="Proteomes" id="UP000005640">
    <property type="component" value="Chromosome 14"/>
</dbReference>
<dbReference type="RNAct" id="Q92784">
    <property type="molecule type" value="protein"/>
</dbReference>
<dbReference type="Bgee" id="ENSG00000205683">
    <property type="expression patterns" value="Expressed in left ventricle myocardium and 152 other cell types or tissues"/>
</dbReference>
<dbReference type="ExpressionAtlas" id="Q92784">
    <property type="expression patterns" value="baseline and differential"/>
</dbReference>
<dbReference type="GO" id="GO:0035060">
    <property type="term" value="C:brahma complex"/>
    <property type="evidence" value="ECO:0000303"/>
    <property type="project" value="ComplexPortal"/>
</dbReference>
<dbReference type="GO" id="GO:0000785">
    <property type="term" value="C:chromatin"/>
    <property type="evidence" value="ECO:0000303"/>
    <property type="project" value="ComplexPortal"/>
</dbReference>
<dbReference type="GO" id="GO:0071565">
    <property type="term" value="C:nBAF complex"/>
    <property type="evidence" value="ECO:0000250"/>
    <property type="project" value="UniProtKB"/>
</dbReference>
<dbReference type="GO" id="GO:0005654">
    <property type="term" value="C:nucleoplasm"/>
    <property type="evidence" value="ECO:0000314"/>
    <property type="project" value="HPA"/>
</dbReference>
<dbReference type="GO" id="GO:0005634">
    <property type="term" value="C:nucleus"/>
    <property type="evidence" value="ECO:0000318"/>
    <property type="project" value="GO_Central"/>
</dbReference>
<dbReference type="GO" id="GO:0016514">
    <property type="term" value="C:SWI/SNF complex"/>
    <property type="evidence" value="ECO:0000303"/>
    <property type="project" value="ComplexPortal"/>
</dbReference>
<dbReference type="GO" id="GO:0008270">
    <property type="term" value="F:zinc ion binding"/>
    <property type="evidence" value="ECO:0000303"/>
    <property type="project" value="UniProtKB"/>
</dbReference>
<dbReference type="GO" id="GO:0006338">
    <property type="term" value="P:chromatin remodeling"/>
    <property type="evidence" value="ECO:0000303"/>
    <property type="project" value="ComplexPortal"/>
</dbReference>
<dbReference type="GO" id="GO:0007517">
    <property type="term" value="P:muscle organ development"/>
    <property type="evidence" value="ECO:0007669"/>
    <property type="project" value="UniProtKB-KW"/>
</dbReference>
<dbReference type="GO" id="GO:0007399">
    <property type="term" value="P:nervous system development"/>
    <property type="evidence" value="ECO:0007669"/>
    <property type="project" value="UniProtKB-KW"/>
</dbReference>
<dbReference type="GO" id="GO:0045597">
    <property type="term" value="P:positive regulation of cell differentiation"/>
    <property type="evidence" value="ECO:0000303"/>
    <property type="project" value="ComplexPortal"/>
</dbReference>
<dbReference type="GO" id="GO:2000781">
    <property type="term" value="P:positive regulation of double-strand break repair"/>
    <property type="evidence" value="ECO:0000303"/>
    <property type="project" value="ComplexPortal"/>
</dbReference>
<dbReference type="GO" id="GO:0045663">
    <property type="term" value="P:positive regulation of myoblast differentiation"/>
    <property type="evidence" value="ECO:0000303"/>
    <property type="project" value="ComplexPortal"/>
</dbReference>
<dbReference type="GO" id="GO:0070316">
    <property type="term" value="P:regulation of G0 to G1 transition"/>
    <property type="evidence" value="ECO:0000303"/>
    <property type="project" value="ComplexPortal"/>
</dbReference>
<dbReference type="GO" id="GO:2000045">
    <property type="term" value="P:regulation of G1/S transition of mitotic cell cycle"/>
    <property type="evidence" value="ECO:0000303"/>
    <property type="project" value="ComplexPortal"/>
</dbReference>
<dbReference type="GO" id="GO:0030071">
    <property type="term" value="P:regulation of mitotic metaphase/anaphase transition"/>
    <property type="evidence" value="ECO:0000303"/>
    <property type="project" value="ComplexPortal"/>
</dbReference>
<dbReference type="GO" id="GO:2000819">
    <property type="term" value="P:regulation of nucleotide-excision repair"/>
    <property type="evidence" value="ECO:0000303"/>
    <property type="project" value="ComplexPortal"/>
</dbReference>
<dbReference type="GO" id="GO:0006357">
    <property type="term" value="P:regulation of transcription by RNA polymerase II"/>
    <property type="evidence" value="ECO:0000303"/>
    <property type="project" value="ComplexPortal"/>
</dbReference>
<dbReference type="CDD" id="cd15692">
    <property type="entry name" value="PHD1_DPF3"/>
    <property type="match status" value="1"/>
</dbReference>
<dbReference type="CDD" id="cd15530">
    <property type="entry name" value="PHD2_d4"/>
    <property type="match status" value="1"/>
</dbReference>
<dbReference type="FunFam" id="3.30.40.10:FF:000005">
    <property type="entry name" value="zinc finger protein isoform X1"/>
    <property type="match status" value="1"/>
</dbReference>
<dbReference type="Gene3D" id="3.30.160.60">
    <property type="entry name" value="Classic Zinc Finger"/>
    <property type="match status" value="1"/>
</dbReference>
<dbReference type="Gene3D" id="3.30.40.10">
    <property type="entry name" value="Zinc/RING finger domain, C3HC4 (zinc finger)"/>
    <property type="match status" value="1"/>
</dbReference>
<dbReference type="IDEAL" id="IID00418"/>
<dbReference type="InterPro" id="IPR025750">
    <property type="entry name" value="DPF1-3_N"/>
</dbReference>
<dbReference type="InterPro" id="IPR036236">
    <property type="entry name" value="Znf_C2H2_sf"/>
</dbReference>
<dbReference type="InterPro" id="IPR013087">
    <property type="entry name" value="Znf_C2H2_type"/>
</dbReference>
<dbReference type="InterPro" id="IPR011011">
    <property type="entry name" value="Znf_FYVE_PHD"/>
</dbReference>
<dbReference type="InterPro" id="IPR001965">
    <property type="entry name" value="Znf_PHD"/>
</dbReference>
<dbReference type="InterPro" id="IPR019787">
    <property type="entry name" value="Znf_PHD-finger"/>
</dbReference>
<dbReference type="InterPro" id="IPR013083">
    <property type="entry name" value="Znf_RING/FYVE/PHD"/>
</dbReference>
<dbReference type="PANTHER" id="PTHR45888">
    <property type="entry name" value="HL01030P-RELATED"/>
    <property type="match status" value="1"/>
</dbReference>
<dbReference type="PANTHER" id="PTHR45888:SF10">
    <property type="entry name" value="ZINC FINGER PROTEIN DPF3"/>
    <property type="match status" value="1"/>
</dbReference>
<dbReference type="Pfam" id="PF14051">
    <property type="entry name" value="DPF1-3_N"/>
    <property type="match status" value="1"/>
</dbReference>
<dbReference type="Pfam" id="PF00628">
    <property type="entry name" value="PHD"/>
    <property type="match status" value="2"/>
</dbReference>
<dbReference type="SMART" id="SM00249">
    <property type="entry name" value="PHD"/>
    <property type="match status" value="2"/>
</dbReference>
<dbReference type="SMART" id="SM00355">
    <property type="entry name" value="ZnF_C2H2"/>
    <property type="match status" value="1"/>
</dbReference>
<dbReference type="SUPFAM" id="SSF57667">
    <property type="entry name" value="beta-beta-alpha zinc fingers"/>
    <property type="match status" value="1"/>
</dbReference>
<dbReference type="SUPFAM" id="SSF57903">
    <property type="entry name" value="FYVE/PHD zinc finger"/>
    <property type="match status" value="2"/>
</dbReference>
<dbReference type="PROSITE" id="PS01359">
    <property type="entry name" value="ZF_PHD_1"/>
    <property type="match status" value="1"/>
</dbReference>
<dbReference type="PROSITE" id="PS50016">
    <property type="entry name" value="ZF_PHD_2"/>
    <property type="match status" value="2"/>
</dbReference>
<dbReference type="PROSITE" id="PS00028">
    <property type="entry name" value="ZINC_FINGER_C2H2_1"/>
    <property type="match status" value="1"/>
</dbReference>
<dbReference type="PROSITE" id="PS50157">
    <property type="entry name" value="ZINC_FINGER_C2H2_2"/>
    <property type="match status" value="1"/>
</dbReference>
<feature type="chain" id="PRO_0000168154" description="Zinc finger protein DPF3">
    <location>
        <begin position="1"/>
        <end position="378"/>
    </location>
</feature>
<feature type="zinc finger region" description="C2H2-type" evidence="3">
    <location>
        <begin position="198"/>
        <end position="221"/>
    </location>
</feature>
<feature type="zinc finger region" description="PHD-type 1" evidence="4">
    <location>
        <begin position="259"/>
        <end position="319"/>
    </location>
</feature>
<feature type="zinc finger region" description="PHD-type 2" evidence="4">
    <location>
        <begin position="316"/>
        <end position="366"/>
    </location>
</feature>
<feature type="region of interest" description="Disordered" evidence="5">
    <location>
        <begin position="145"/>
        <end position="193"/>
    </location>
</feature>
<feature type="region of interest" description="Disordered" evidence="5">
    <location>
        <begin position="225"/>
        <end position="254"/>
    </location>
</feature>
<feature type="compositionally biased region" description="Acidic residues" evidence="5">
    <location>
        <begin position="148"/>
        <end position="163"/>
    </location>
</feature>
<feature type="compositionally biased region" description="Basic residues" evidence="5">
    <location>
        <begin position="168"/>
        <end position="186"/>
    </location>
</feature>
<feature type="cross-link" description="Glycyl lysine isopeptide (Lys-Gly) (interchain with G-Cter in SUMO2)" evidence="14">
    <location>
        <position position="99"/>
    </location>
</feature>
<feature type="splice variant" id="VSP_035882" description="In isoform 3." evidence="10">
    <original>MATVIHNPLKA</original>
    <variation>MFYGRINGRNFAASSLPVAFAATPLMLFLPNPQLICSFPISSRNHITGLMPPGKLKLENLFHMCTR</variation>
    <location>
        <begin position="1"/>
        <end position="11"/>
    </location>
</feature>
<feature type="splice variant" id="VSP_055748" description="In isoform 5." evidence="10">
    <original>MATVIHNPLKA</original>
    <variation>MGFTDLEEPISGCPGGPWALG</variation>
    <location>
        <begin position="1"/>
        <end position="11"/>
    </location>
</feature>
<feature type="splice variant" id="VSP_035883" description="In isoform 4." evidence="10">
    <original>RGSAGGRRRHDAASQEDHDKPYVCDICGKRYKNRPGLSYHYAHTHLASEEGDEAQDQETRSPPNHRNENHRPQKGPDGTVIPNNYCDFCLGGSNMNKKSGRPEELVSCADCGRSGHPTCLQFTLNMTEAVKTYKWQCIECKSCILCGTSENDDQLLFCDDCDRGYHMYCLNPPVAEPPEGSWSCHLCWELLKEKASAFGCQA</original>
    <variation>RCPLPSLHCFLPSLCRDRC</variation>
    <location>
        <begin position="177"/>
        <end position="378"/>
    </location>
</feature>
<feature type="splice variant" id="VSP_035884" description="In isoform 2, isoform 3 and isoform 5." evidence="10 11 12">
    <original>GHPTCLQFTLNMTEAVKTYKWQCIECKSCILCGTSENDDQLLFCDDCDRGYHMYCLNPPVAEPPEGSWSCHLCWELLKEKASAFGCQA</original>
    <variation>AHLGGEGRKEKEAAAAARTTEDLFGSTSESDTSTFHGFDEDDLEEPRSCRGRRSGRGSPTADKKGSC</variation>
    <location>
        <begin position="291"/>
        <end position="378"/>
    </location>
</feature>
<feature type="sequence variant" id="VAR_047771" description="In dbSNP:rs17855717." evidence="6">
    <original>R</original>
    <variation>H</variation>
    <location>
        <position position="177"/>
    </location>
</feature>
<feature type="mutagenesis site" description="Abolishes binding to acetylated histones H3 and H4." evidence="7">
    <original>W</original>
    <variation>E</variation>
    <location>
        <position position="358"/>
    </location>
</feature>
<feature type="mutagenesis site" description="Abolishes binding to acetylated histones H3 and H4; when associated with R-363." evidence="7">
    <original>C</original>
    <variation>R</variation>
    <location>
        <position position="360"/>
    </location>
</feature>
<feature type="mutagenesis site" description="Abolishes binding to acetylated histones H3 and H4; when associated with R-360." evidence="7">
    <original>C</original>
    <variation>R</variation>
    <location>
        <position position="363"/>
    </location>
</feature>
<feature type="sequence conflict" description="In Ref. 5; AAC50686." evidence="13" ref="5">
    <original>L</original>
    <variation>V</variation>
    <location>
        <position position="12"/>
    </location>
</feature>
<feature type="sequence conflict" description="In Ref. 5; AAC50686." evidence="13" ref="5">
    <original>C</original>
    <variation>S</variation>
    <location>
        <position position="24"/>
    </location>
</feature>
<feature type="sequence conflict" description="In Ref. 2; BAB14838." evidence="13" ref="2">
    <original>C</original>
    <variation>S</variation>
    <location>
        <position position="32"/>
    </location>
</feature>
<feature type="sequence conflict" description="In Ref. 2; BAB14838." evidence="13" ref="2">
    <original>N</original>
    <variation>D</variation>
    <location>
        <position position="170"/>
    </location>
</feature>
<feature type="sequence conflict" description="In Ref. 2; BAC86753." evidence="13" ref="2">
    <original>Y</original>
    <variation>H</variation>
    <location>
        <position position="207"/>
    </location>
</feature>
<feature type="sequence conflict" description="In Ref. 2; BAC86753." evidence="13" ref="2">
    <original>H</original>
    <variation>Y</variation>
    <location>
        <position position="216"/>
    </location>
</feature>
<feature type="strand" evidence="16">
    <location>
        <begin position="260"/>
        <end position="262"/>
    </location>
</feature>
<feature type="turn" evidence="16">
    <location>
        <begin position="263"/>
        <end position="265"/>
    </location>
</feature>
<feature type="turn" evidence="16">
    <location>
        <begin position="273"/>
        <end position="276"/>
    </location>
</feature>
<feature type="turn" evidence="16">
    <location>
        <begin position="285"/>
        <end position="287"/>
    </location>
</feature>
<feature type="turn" evidence="16">
    <location>
        <begin position="293"/>
        <end position="297"/>
    </location>
</feature>
<feature type="helix" evidence="16">
    <location>
        <begin position="300"/>
        <end position="306"/>
    </location>
</feature>
<feature type="turn" evidence="16">
    <location>
        <begin position="307"/>
        <end position="310"/>
    </location>
</feature>
<feature type="turn" evidence="16">
    <location>
        <begin position="314"/>
        <end position="316"/>
    </location>
</feature>
<feature type="turn" evidence="16">
    <location>
        <begin position="320"/>
        <end position="322"/>
    </location>
</feature>
<feature type="helix" evidence="16">
    <location>
        <begin position="328"/>
        <end position="330"/>
    </location>
</feature>
<feature type="strand" evidence="16">
    <location>
        <begin position="331"/>
        <end position="333"/>
    </location>
</feature>
<feature type="turn" evidence="16">
    <location>
        <begin position="335"/>
        <end position="337"/>
    </location>
</feature>
<feature type="strand" evidence="16">
    <location>
        <begin position="340"/>
        <end position="342"/>
    </location>
</feature>
<feature type="turn" evidence="16">
    <location>
        <begin position="343"/>
        <end position="345"/>
    </location>
</feature>
<feature type="strand" evidence="16">
    <location>
        <begin position="346"/>
        <end position="348"/>
    </location>
</feature>
<feature type="strand" evidence="15">
    <location>
        <begin position="355"/>
        <end position="357"/>
    </location>
</feature>
<feature type="helix" evidence="16">
    <location>
        <begin position="361"/>
        <end position="367"/>
    </location>
</feature>
<feature type="region of interest" description="Interaction with HDGFL2" evidence="9">
    <location sequence="Q92784-2">
        <begin position="317"/>
        <end position="332"/>
    </location>
</feature>
<feature type="modified residue" description="Phosphoserine" evidence="9">
    <location sequence="Q92784-2">
        <position position="323"/>
    </location>
</feature>
<feature type="sequence variant" id="VAR_082912" description="In dbSNP:rs17855716." evidence="13">
    <original>H</original>
    <variation>R</variation>
    <location sequence="Q92784-2">
        <position position="326"/>
    </location>
</feature>
<feature type="mutagenesis site" description="Phosphorylation-null mutant. Loss of interaction with HDGFL2." evidence="9">
    <original>S</original>
    <variation>A</variation>
    <location sequence="Q92784-2">
        <position position="323"/>
    </location>
</feature>
<feature type="mutagenesis site" description="Phosphomimetic mutant. Increased interaction with HDGFL2." evidence="9">
    <original>S</original>
    <variation>D</variation>
    <variation>E</variation>
    <location sequence="Q92784-2">
        <position position="323"/>
    </location>
</feature>
<feature type="mutagenesis site" description="Loss of interaction with HDGFL2. No effect on interaction with SMARCA4, SMARCC1 and SMARCD1." evidence="9">
    <original>F</original>
    <variation>A</variation>
    <location sequence="Q92784-2">
        <position position="325"/>
    </location>
</feature>
<feature type="mutagenesis site" description="Loss of interaction with HDGFL2. No effect on interaction with SMARCA4, SMARCC1 and SMARCD1." evidence="9">
    <original>F</original>
    <variation>A</variation>
    <location sequence="Q92784-2">
        <position position="328"/>
    </location>
</feature>
<feature type="sequence conflict" description="In Ref. 2; BAH11762." evidence="13" ref="2">
    <original>S</original>
    <variation>P</variation>
    <location sequence="Q92784-5">
        <position position="358"/>
    </location>
</feature>
<sequence>MATVIHNPLKALGDQFYKEAIEHCRSYNSRLCAERSVRLPFLDSQTGVAQNNCYIWMEKRHRGPGLAPGQLYTYPARCWRKKRRLHPPEDPKLRLLEIKPEVELPLKKDGFTSESTTLEALLRGEGVEKKVDAREEESIQEIQRVLENDENVEEGNEEEDLEEDIPKRKNRTRGRARGSAGGRRRHDAASQEDHDKPYVCDICGKRYKNRPGLSYHYAHTHLASEEGDEAQDQETRSPPNHRNENHRPQKGPDGTVIPNNYCDFCLGGSNMNKKSGRPEELVSCADCGRSGHPTCLQFTLNMTEAVKTYKWQCIECKSCILCGTSENDDQLLFCDDCDRGYHMYCLNPPVAEPPEGSWSCHLCWELLKEKASAFGCQA</sequence>
<gene>
    <name type="primary">DPF3</name>
    <name type="synonym">BAF45C</name>
    <name type="synonym">CERD4</name>
</gene>
<evidence type="ECO:0000250" key="1"/>
<evidence type="ECO:0000250" key="2">
    <source>
        <dbReference type="UniProtKB" id="P58269"/>
    </source>
</evidence>
<evidence type="ECO:0000255" key="3">
    <source>
        <dbReference type="PROSITE-ProRule" id="PRU00042"/>
    </source>
</evidence>
<evidence type="ECO:0000255" key="4">
    <source>
        <dbReference type="PROSITE-ProRule" id="PRU00146"/>
    </source>
</evidence>
<evidence type="ECO:0000256" key="5">
    <source>
        <dbReference type="SAM" id="MobiDB-lite"/>
    </source>
</evidence>
<evidence type="ECO:0000269" key="6">
    <source>
    </source>
</evidence>
<evidence type="ECO:0000269" key="7">
    <source>
    </source>
</evidence>
<evidence type="ECO:0000269" key="8">
    <source>
    </source>
</evidence>
<evidence type="ECO:0000269" key="9">
    <source>
    </source>
</evidence>
<evidence type="ECO:0000303" key="10">
    <source>
    </source>
</evidence>
<evidence type="ECO:0000303" key="11">
    <source>
    </source>
</evidence>
<evidence type="ECO:0000303" key="12">
    <source>
    </source>
</evidence>
<evidence type="ECO:0000305" key="13"/>
<evidence type="ECO:0007744" key="14">
    <source>
    </source>
</evidence>
<evidence type="ECO:0007829" key="15">
    <source>
        <dbReference type="PDB" id="2KWO"/>
    </source>
</evidence>
<evidence type="ECO:0007829" key="16">
    <source>
        <dbReference type="PDB" id="5SZC"/>
    </source>
</evidence>
<organism>
    <name type="scientific">Homo sapiens</name>
    <name type="common">Human</name>
    <dbReference type="NCBI Taxonomy" id="9606"/>
    <lineage>
        <taxon>Eukaryota</taxon>
        <taxon>Metazoa</taxon>
        <taxon>Chordata</taxon>
        <taxon>Craniata</taxon>
        <taxon>Vertebrata</taxon>
        <taxon>Euteleostomi</taxon>
        <taxon>Mammalia</taxon>
        <taxon>Eutheria</taxon>
        <taxon>Euarchontoglires</taxon>
        <taxon>Primates</taxon>
        <taxon>Haplorrhini</taxon>
        <taxon>Catarrhini</taxon>
        <taxon>Hominidae</taxon>
        <taxon>Homo</taxon>
    </lineage>
</organism>
<proteinExistence type="evidence at protein level"/>
<name>DPF3_HUMAN</name>
<comment type="function">
    <text evidence="1 7">Belongs to the neuron-specific chromatin remodeling complex (nBAF complex). During neural development a switch from a stem/progenitor to a post-mitotic chromatin remodeling mechanism occurs as neurons exit the cell cycle and become committed to their adult state. The transition from proliferating neural stem/progenitor cells to post-mitotic neurons requires a switch in subunit composition of the npBAF and nBAF complexes. As neural progenitors exit mitosis and differentiate into neurons, npBAF complexes which contain ACTL6A/BAF53A and PHF10/BAF45A, are exchanged for homologous alternative ACTL6B/BAF53B and DPF1/BAF45B or DPF3/BAF45C subunits in neuron-specific complexes (nBAF). The npBAF complex is essential for the self-renewal/proliferative capacity of the multipotent neural stem cells. The nBAF complex along with CREST plays a role regulating the activity of genes essential for dendrite growth (By similarity). Muscle-specific component of the BAF complex, a multiprotein complex involved in transcriptional activation and repression of select genes by chromatin remodeling (alteration of DNA-nucleosome topology). Specifically binds acetylated lysines on histone 3 and 4 (H3K14ac, H3K9ac, H4K5ac, H4K8ac, H4K12ac, H4K16ac). In the complex, it acts as a tissue-specific anchor between histone acetylations and methylations and chromatin remodeling. It thereby probably plays an essential role in heart and skeletal muscle development.</text>
</comment>
<comment type="function">
    <molecule>Isoform 2</molecule>
    <text evidence="9">Acts as a regulator of myogenesis in cooperation with HDGFL2 (PubMed:32459350). Mediates the interaction of HDGFL2 with the BAF complex (PubMed:32459350). HDGFL2-DPF3a activate myogenic genes by increasing chromatin accessibility through recruitment of SMARCA4/BRG1/BAF190A (ATPase subunit of the BAF complex) to myogenic gene promoters (PubMed:32459350).</text>
</comment>
<comment type="subunit">
    <text evidence="2 7">Component of the BAF complex, which includes at least actin (ACTB), ARID1A, ARID1B/BAF250, SMARCA2, SMARCA4/BRG1/BAF190A, ACTL6A/BAF53, ACTL6B/BAF53B, SMARCE1/BAF57, SMARCC1/BAF155, SMARCC2/BAF170, SMARCB1/SNF5/INI1, and one or more of SMARCD1/BAF60A, SMARCD2/BAF60B, or SMARCD3/BAF60C (PubMed:18765789). In muscle cells, the BAF complex also contains DPF3 (PubMed:18765789). Interacts with acetylated histones H3 and H4 (PubMed:18765789). Component of neuron-specific chromatin remodeling complex (nBAF complex) composed of at least, ARID1A/BAF250A or ARID1B/BAF250B, SMARCD1/BAF60A, SMARCD3/BAF60C, SMARCA2/BRM/BAF190B, SMARCA4/BRG1/BAF190A, SMARCB1/BAF47, SMARCC1/BAF155, SMARCE1/BAF57, SMARCC2/BAF170, DPF1/BAF45B, DPF3/BAF45C, ACTL6B/BAF53B and actin (By similarity).</text>
</comment>
<comment type="subunit">
    <molecule>Isoform 2</molecule>
    <text evidence="9">Interacts with HDGFL2, SMARCA4/BRG1/BAF190A, SMARCC1/BAF155 and SMARCD1/BAF60A.</text>
</comment>
<comment type="subcellular location">
    <subcellularLocation>
        <location evidence="13">Nucleus</location>
    </subcellularLocation>
</comment>
<comment type="alternative products">
    <event type="alternative splicing"/>
    <isoform>
        <id>Q92784-1</id>
        <name>1</name>
        <name>DPF3b</name>
        <sequence type="displayed"/>
    </isoform>
    <isoform>
        <id>Q92784-2</id>
        <name>2</name>
        <name>DPF3a</name>
        <sequence type="described" ref="VSP_035884"/>
    </isoform>
    <isoform>
        <id>Q92784-3</id>
        <name>3</name>
        <sequence type="described" ref="VSP_035882 VSP_035884"/>
    </isoform>
    <isoform>
        <id>Q92784-4</id>
        <name>4</name>
        <sequence type="described" ref="VSP_035883"/>
    </isoform>
    <isoform>
        <id>Q92784-5</id>
        <name>5</name>
        <sequence type="described" ref="VSP_055748 VSP_035884"/>
    </isoform>
</comment>
<comment type="domain">
    <text evidence="7 8">The PHD-type zinc fingers mediate the binding to acetylated histones.</text>
</comment>
<comment type="PTM">
    <molecule>Isoform 2</molecule>
    <text evidence="9">Phosphorylation at Ser-323 enhances its interaction with HDGFL2.</text>
</comment>
<comment type="miscellaneous">
    <molecule>Isoform 2</molecule>
    <text evidence="13">Lacks PHD-type zinc fingers and does not bind to acetylated histones H3 and H4.</text>
</comment>
<comment type="similarity">
    <text evidence="13">Belongs to the requiem/DPF family.</text>
</comment>
<comment type="sequence caution" evidence="13">
    <molecule>Isoform 4</molecule>
    <conflict type="frameshift">
        <sequence resource="EMBL-CDS" id="BAB14838"/>
    </conflict>
</comment>
<keyword id="KW-0002">3D-structure</keyword>
<keyword id="KW-0010">Activator</keyword>
<keyword id="KW-0025">Alternative splicing</keyword>
<keyword id="KW-0156">Chromatin regulator</keyword>
<keyword id="KW-1017">Isopeptide bond</keyword>
<keyword id="KW-0479">Metal-binding</keyword>
<keyword id="KW-0517">Myogenesis</keyword>
<keyword id="KW-0524">Neurogenesis</keyword>
<keyword id="KW-0539">Nucleus</keyword>
<keyword id="KW-0597">Phosphoprotein</keyword>
<keyword id="KW-1267">Proteomics identification</keyword>
<keyword id="KW-1185">Reference proteome</keyword>
<keyword id="KW-0677">Repeat</keyword>
<keyword id="KW-0678">Repressor</keyword>
<keyword id="KW-0804">Transcription</keyword>
<keyword id="KW-0805">Transcription regulation</keyword>
<keyword id="KW-0832">Ubl conjugation</keyword>
<keyword id="KW-0862">Zinc</keyword>
<keyword id="KW-0863">Zinc-finger</keyword>